<reference key="1">
    <citation type="journal article" date="1997" name="Mol. Microbiol.">
        <title>A secreted effector protein of Salmonella dublin is translocated into eukaryotic cells and mediates inflammation and fluid secretion in infected ileal mucosa.</title>
        <authorList>
            <person name="Galyov E.E."/>
            <person name="Wood M.W."/>
            <person name="Rosqvist R."/>
            <person name="Mullan P.B."/>
            <person name="Watson P.R."/>
            <person name="Hedges S."/>
            <person name="Wallis T.S."/>
        </authorList>
    </citation>
    <scope>NUCLEOTIDE SEQUENCE [GENOMIC DNA]</scope>
    <scope>PROTEIN SEQUENCE OF 1-15 AND 55-67</scope>
    <scope>SUBCELLULAR LOCATION</scope>
    <source>
        <strain>2229</strain>
    </source>
</reference>
<reference key="2">
    <citation type="journal article" date="1998" name="Mol. Microbiol.">
        <title>Identification of a pathogenicity island required for Salmonella enteropathogenicity.</title>
        <authorList>
            <person name="Wood M.W."/>
            <person name="Jones M.A."/>
            <person name="Watson P.R."/>
            <person name="Hedges S."/>
            <person name="Wallis T.S."/>
            <person name="Galyov E.E."/>
        </authorList>
    </citation>
    <scope>NUCLEOTIDE SEQUENCE [GENOMIC DNA]</scope>
    <source>
        <strain>2229</strain>
    </source>
</reference>
<reference key="3">
    <citation type="journal article" date="2000" name="Int. J. Med. Microbiol.">
        <title>Prevalence and polymorphism of genes encoding translocated effector proteins among clinical isolates of Salmonella enterica.</title>
        <authorList>
            <person name="Prager R."/>
            <person name="Mirold S."/>
            <person name="Tietze E."/>
            <person name="Strutz U."/>
            <person name="Knuppel B."/>
            <person name="Rabsch W."/>
            <person name="Hardt W.-D."/>
            <person name="Tschape H."/>
        </authorList>
    </citation>
    <scope>NUCLEOTIDE SEQUENCE [GENOMIC DNA] OF 97-529</scope>
</reference>
<reference key="4">
    <citation type="journal article" date="1998" name="Proc. Natl. Acad. Sci. U.S.A.">
        <title>SopB, a protein required for virulence of Salmonella dublin, is an inositol phosphate phosphatase.</title>
        <authorList>
            <person name="Norris F.A."/>
            <person name="Wilson M.P."/>
            <person name="Wallis T.S."/>
            <person name="Galyov E.E."/>
            <person name="Majerus P.W."/>
        </authorList>
    </citation>
    <scope>FUNCTION</scope>
    <scope>MUTAGENESIS OF CYS-460</scope>
    <source>
        <strain>2229</strain>
    </source>
</reference>
<protein>
    <recommendedName>
        <fullName>Inositol phosphate phosphatase SopB</fullName>
        <ecNumber>3.1.3.-</ecNumber>
    </recommendedName>
    <alternativeName>
        <fullName>Effector protein SopB</fullName>
    </alternativeName>
</protein>
<gene>
    <name type="primary">sopB</name>
    <name type="synonym">sigD</name>
</gene>
<comment type="function">
    <text evidence="3">Converts phosphatidylinositol 3,4,5-trisphosphate (PtdIns 3,4,5-P3) to PtdIns 3-P and prevents the transition of PtdIns 3-P to PtdIns 3,5-P2. It is one of the known effectors injected by Salmonella into the host cell and is required for invasion and for an efficient generation and maintenance of Salmonella-containing vacuole (SVC). Alteration of the phosphoinositide composition of the plasma membrane causes membrane ruffling and actin cytoskeleton rearrangements. The persistence of PtdIns 3-P diverts the SCV from the endocytic pathway resulting in enlarged vesicles, which are essential to create a favorable environment where Salmonella can replicate and avoid immune defenses of the host cells.</text>
</comment>
<comment type="subcellular location">
    <subcellularLocation>
        <location evidence="1">Secreted</location>
    </subcellularLocation>
    <text evidence="1">Secreted via the type III secretion system 1 (SPI-1 T3SS).</text>
</comment>
<comment type="domain">
    <text>Contains the consensus sequence Cys-X(5)-Arg characteristic of Mg-independent phosphatases.</text>
</comment>
<comment type="similarity">
    <text evidence="4">Belongs to the phosphatase IpgD/SopB family.</text>
</comment>
<sequence>MQIQSFYHSASLKTQEAFKSLQKTLYNGMQILSGQGKAPAKAPDARPEIIVLREPGATWGNYLQHQKTSNHSLHNLYNLRRDLLTVGATVLGKQDPVLTSMANQMELAKVKADRPATKQEEAAAKALKKNLIELIAARTQQQDGLPAKEAHRFAAVAFRDAQDKQLNNQPWQTIKNTLTHNGHHYTNTQLPAAEMKIGAKDIFPSAYEGKGVCSWDTKNIHHANNLWMSTVSVHEDGKDKTLFCGIRHGVLSPYHEKDPLLRQVGAENKAKEVLTAALFSKPELLNKALAGEAVSLKLVSVGLLTASNIFGKEGTMVEDQMRAWQSLTQPGKMIHLKIRNKDGDLQTVKIKPDVAAFNVGVNELALKLGFGLKASDSYNAEALYQLLGNDLRPEARPGGWVGEWLAQYPDNYEVVNTLARQIKDIWKNNQHHKDGGEPYKLAQRLAMLAHEIDAVPAWNCKSGKDRTGMMDSEIKREIISLHQTHMLSAPGSLPDSGGQKIFQKVLLNSGNPGDSEPNTGGAGNKVMKNLSPEVLNLSYQKRVGDENIWQSVKGISSLITS</sequence>
<dbReference type="EC" id="3.1.3.-"/>
<dbReference type="EMBL" id="U90203">
    <property type="protein sequence ID" value="AAB68660.1"/>
    <property type="molecule type" value="Genomic_DNA"/>
</dbReference>
<dbReference type="EMBL" id="AF060858">
    <property type="protein sequence ID" value="AAC33723.1"/>
    <property type="molecule type" value="Genomic_DNA"/>
</dbReference>
<dbReference type="EMBL" id="AF231141">
    <property type="protein sequence ID" value="AAF43686.1"/>
    <property type="molecule type" value="Genomic_DNA"/>
</dbReference>
<dbReference type="SMR" id="O34105"/>
<dbReference type="GO" id="GO:0005576">
    <property type="term" value="C:extracellular region"/>
    <property type="evidence" value="ECO:0007669"/>
    <property type="project" value="UniProtKB-SubCell"/>
</dbReference>
<dbReference type="GO" id="GO:0016791">
    <property type="term" value="F:phosphatase activity"/>
    <property type="evidence" value="ECO:0007669"/>
    <property type="project" value="InterPro"/>
</dbReference>
<dbReference type="Gene3D" id="1.20.58.450">
    <property type="entry name" value="Cell division control protein 42 homolog"/>
    <property type="match status" value="1"/>
</dbReference>
<dbReference type="InterPro" id="IPR008108">
    <property type="entry name" value="IpgD/SopB"/>
</dbReference>
<dbReference type="NCBIfam" id="NF011905">
    <property type="entry name" value="PRK15378.1"/>
    <property type="match status" value="1"/>
</dbReference>
<dbReference type="Pfam" id="PF05925">
    <property type="entry name" value="IpgD"/>
    <property type="match status" value="1"/>
</dbReference>
<dbReference type="PRINTS" id="PR01734">
    <property type="entry name" value="TYPE3OMBPROT"/>
</dbReference>
<evidence type="ECO:0000250" key="1"/>
<evidence type="ECO:0000255" key="2"/>
<evidence type="ECO:0000269" key="3">
    <source>
    </source>
</evidence>
<evidence type="ECO:0000305" key="4"/>
<accession>O34105</accession>
<accession>Q9L6X6</accession>
<proteinExistence type="evidence at protein level"/>
<feature type="chain" id="PRO_0000220491" description="Inositol phosphate phosphatase SopB">
    <location>
        <begin position="1"/>
        <end position="561"/>
    </location>
</feature>
<feature type="short sequence motif" description="CX5R motif">
    <location>
        <begin position="460"/>
        <end position="466"/>
    </location>
</feature>
<feature type="active site" evidence="2">
    <location>
        <position position="460"/>
    </location>
</feature>
<feature type="mutagenesis site" description="Loss of activity." evidence="3">
    <original>C</original>
    <variation>S</variation>
    <location>
        <position position="460"/>
    </location>
</feature>
<feature type="sequence conflict" description="In Ref. 3; AAF43686." evidence="4" ref="3">
    <original>D</original>
    <variation>V</variation>
    <location>
        <position position="163"/>
    </location>
</feature>
<feature type="sequence conflict" description="In Ref. 3; AAF43686." evidence="4" ref="3">
    <original>PGDSEP</original>
    <variation>LEIQKQ</variation>
    <location>
        <begin position="512"/>
        <end position="517"/>
    </location>
</feature>
<name>SOPB_SALDU</name>
<organism>
    <name type="scientific">Salmonella dublin</name>
    <dbReference type="NCBI Taxonomy" id="98360"/>
    <lineage>
        <taxon>Bacteria</taxon>
        <taxon>Pseudomonadati</taxon>
        <taxon>Pseudomonadota</taxon>
        <taxon>Gammaproteobacteria</taxon>
        <taxon>Enterobacterales</taxon>
        <taxon>Enterobacteriaceae</taxon>
        <taxon>Salmonella</taxon>
    </lineage>
</organism>
<keyword id="KW-0903">Direct protein sequencing</keyword>
<keyword id="KW-0378">Hydrolase</keyword>
<keyword id="KW-0964">Secreted</keyword>
<keyword id="KW-0843">Virulence</keyword>